<protein>
    <recommendedName>
        <fullName evidence="1">Iron-sulfur cluster insertion protein ErpA</fullName>
    </recommendedName>
</protein>
<keyword id="KW-0408">Iron</keyword>
<keyword id="KW-0411">Iron-sulfur</keyword>
<keyword id="KW-0479">Metal-binding</keyword>
<comment type="function">
    <text evidence="1">Required for insertion of 4Fe-4S clusters for at least IspG.</text>
</comment>
<comment type="cofactor">
    <cofactor evidence="1">
        <name>iron-sulfur cluster</name>
        <dbReference type="ChEBI" id="CHEBI:30408"/>
    </cofactor>
    <text evidence="1">Binds 1 iron-sulfur cluster per subunit.</text>
</comment>
<comment type="subunit">
    <text evidence="1">Homodimer.</text>
</comment>
<comment type="similarity">
    <text evidence="1">Belongs to the HesB/IscA family.</text>
</comment>
<accession>B8D7B5</accession>
<proteinExistence type="inferred from homology"/>
<name>ERPA_BUCAT</name>
<gene>
    <name evidence="1" type="primary">erpA</name>
    <name type="ordered locus">BUAPTUC7_210</name>
</gene>
<evidence type="ECO:0000255" key="1">
    <source>
        <dbReference type="HAMAP-Rule" id="MF_01380"/>
    </source>
</evidence>
<dbReference type="EMBL" id="CP001158">
    <property type="protein sequence ID" value="ACL30030.1"/>
    <property type="molecule type" value="Genomic_DNA"/>
</dbReference>
<dbReference type="RefSeq" id="WP_009874169.1">
    <property type="nucleotide sequence ID" value="NC_011834.1"/>
</dbReference>
<dbReference type="SMR" id="B8D7B5"/>
<dbReference type="KEGG" id="bau:BUAPTUC7_210"/>
<dbReference type="HOGENOM" id="CLU_069054_5_3_6"/>
<dbReference type="GO" id="GO:0005829">
    <property type="term" value="C:cytosol"/>
    <property type="evidence" value="ECO:0007669"/>
    <property type="project" value="TreeGrafter"/>
</dbReference>
<dbReference type="GO" id="GO:0051537">
    <property type="term" value="F:2 iron, 2 sulfur cluster binding"/>
    <property type="evidence" value="ECO:0007669"/>
    <property type="project" value="UniProtKB-ARBA"/>
</dbReference>
<dbReference type="GO" id="GO:0051539">
    <property type="term" value="F:4 iron, 4 sulfur cluster binding"/>
    <property type="evidence" value="ECO:0007669"/>
    <property type="project" value="TreeGrafter"/>
</dbReference>
<dbReference type="GO" id="GO:0005506">
    <property type="term" value="F:iron ion binding"/>
    <property type="evidence" value="ECO:0007669"/>
    <property type="project" value="UniProtKB-UniRule"/>
</dbReference>
<dbReference type="GO" id="GO:0016226">
    <property type="term" value="P:iron-sulfur cluster assembly"/>
    <property type="evidence" value="ECO:0007669"/>
    <property type="project" value="UniProtKB-UniRule"/>
</dbReference>
<dbReference type="FunFam" id="2.60.300.12:FF:000002">
    <property type="entry name" value="Iron-sulfur cluster insertion protein ErpA"/>
    <property type="match status" value="1"/>
</dbReference>
<dbReference type="Gene3D" id="2.60.300.12">
    <property type="entry name" value="HesB-like domain"/>
    <property type="match status" value="1"/>
</dbReference>
<dbReference type="HAMAP" id="MF_01380">
    <property type="entry name" value="Fe_S_insert_ErpA"/>
    <property type="match status" value="1"/>
</dbReference>
<dbReference type="InterPro" id="IPR000361">
    <property type="entry name" value="FeS_biogenesis"/>
</dbReference>
<dbReference type="InterPro" id="IPR016092">
    <property type="entry name" value="FeS_cluster_insertion"/>
</dbReference>
<dbReference type="InterPro" id="IPR017870">
    <property type="entry name" value="FeS_cluster_insertion_CS"/>
</dbReference>
<dbReference type="InterPro" id="IPR023063">
    <property type="entry name" value="FeS_cluster_insertion_RrpA"/>
</dbReference>
<dbReference type="InterPro" id="IPR035903">
    <property type="entry name" value="HesB-like_dom_sf"/>
</dbReference>
<dbReference type="NCBIfam" id="TIGR00049">
    <property type="entry name" value="iron-sulfur cluster assembly accessory protein"/>
    <property type="match status" value="1"/>
</dbReference>
<dbReference type="NCBIfam" id="NF010147">
    <property type="entry name" value="PRK13623.1"/>
    <property type="match status" value="1"/>
</dbReference>
<dbReference type="PANTHER" id="PTHR43011">
    <property type="entry name" value="IRON-SULFUR CLUSTER ASSEMBLY 2 HOMOLOG, MITOCHONDRIAL"/>
    <property type="match status" value="1"/>
</dbReference>
<dbReference type="PANTHER" id="PTHR43011:SF1">
    <property type="entry name" value="IRON-SULFUR CLUSTER ASSEMBLY 2 HOMOLOG, MITOCHONDRIAL"/>
    <property type="match status" value="1"/>
</dbReference>
<dbReference type="Pfam" id="PF01521">
    <property type="entry name" value="Fe-S_biosyn"/>
    <property type="match status" value="1"/>
</dbReference>
<dbReference type="SUPFAM" id="SSF89360">
    <property type="entry name" value="HesB-like domain"/>
    <property type="match status" value="1"/>
</dbReference>
<dbReference type="PROSITE" id="PS01152">
    <property type="entry name" value="HESB"/>
    <property type="match status" value="1"/>
</dbReference>
<feature type="chain" id="PRO_1000184200" description="Iron-sulfur cluster insertion protein ErpA">
    <location>
        <begin position="1"/>
        <end position="114"/>
    </location>
</feature>
<feature type="binding site" evidence="1">
    <location>
        <position position="42"/>
    </location>
    <ligand>
        <name>iron-sulfur cluster</name>
        <dbReference type="ChEBI" id="CHEBI:30408"/>
    </ligand>
</feature>
<feature type="binding site" evidence="1">
    <location>
        <position position="106"/>
    </location>
    <ligand>
        <name>iron-sulfur cluster</name>
        <dbReference type="ChEBI" id="CHEBI:30408"/>
    </ligand>
</feature>
<feature type="binding site" evidence="1">
    <location>
        <position position="108"/>
    </location>
    <ligand>
        <name>iron-sulfur cluster</name>
        <dbReference type="ChEBI" id="CHEBI:30408"/>
    </ligand>
</feature>
<sequence>MENAFKSHLQFTEKAIKKIKNLIEIEKNHDLKLRIYINGGGCSGFQYQFIFDTSINEDDIIITQSEVSLIIDPISLQYLYGGQIDYLENLEGSKFIVSNPNAKNTCGCGSSFSI</sequence>
<reference key="1">
    <citation type="journal article" date="2009" name="Science">
        <title>The dynamics and time scale of ongoing genomic erosion in symbiotic bacteria.</title>
        <authorList>
            <person name="Moran N.A."/>
            <person name="McLaughlin H.J."/>
            <person name="Sorek R."/>
        </authorList>
    </citation>
    <scope>NUCLEOTIDE SEQUENCE [LARGE SCALE GENOMIC DNA]</scope>
    <source>
        <strain>Tuc7</strain>
    </source>
</reference>
<organism>
    <name type="scientific">Buchnera aphidicola subsp. Acyrthosiphon pisum (strain Tuc7)</name>
    <dbReference type="NCBI Taxonomy" id="561501"/>
    <lineage>
        <taxon>Bacteria</taxon>
        <taxon>Pseudomonadati</taxon>
        <taxon>Pseudomonadota</taxon>
        <taxon>Gammaproteobacteria</taxon>
        <taxon>Enterobacterales</taxon>
        <taxon>Erwiniaceae</taxon>
        <taxon>Buchnera</taxon>
    </lineage>
</organism>